<dbReference type="EC" id="3.1.26.3" evidence="1"/>
<dbReference type="EMBL" id="CP001068">
    <property type="protein sequence ID" value="ACD26078.1"/>
    <property type="molecule type" value="Genomic_DNA"/>
</dbReference>
<dbReference type="SMR" id="B2U981"/>
<dbReference type="STRING" id="402626.Rpic_0928"/>
<dbReference type="KEGG" id="rpi:Rpic_0928"/>
<dbReference type="eggNOG" id="COG0571">
    <property type="taxonomic scope" value="Bacteria"/>
</dbReference>
<dbReference type="HOGENOM" id="CLU_000907_1_1_4"/>
<dbReference type="GO" id="GO:0005737">
    <property type="term" value="C:cytoplasm"/>
    <property type="evidence" value="ECO:0007669"/>
    <property type="project" value="UniProtKB-SubCell"/>
</dbReference>
<dbReference type="GO" id="GO:0003725">
    <property type="term" value="F:double-stranded RNA binding"/>
    <property type="evidence" value="ECO:0007669"/>
    <property type="project" value="TreeGrafter"/>
</dbReference>
<dbReference type="GO" id="GO:0046872">
    <property type="term" value="F:metal ion binding"/>
    <property type="evidence" value="ECO:0007669"/>
    <property type="project" value="UniProtKB-KW"/>
</dbReference>
<dbReference type="GO" id="GO:0004525">
    <property type="term" value="F:ribonuclease III activity"/>
    <property type="evidence" value="ECO:0007669"/>
    <property type="project" value="UniProtKB-UniRule"/>
</dbReference>
<dbReference type="GO" id="GO:0019843">
    <property type="term" value="F:rRNA binding"/>
    <property type="evidence" value="ECO:0007669"/>
    <property type="project" value="UniProtKB-KW"/>
</dbReference>
<dbReference type="GO" id="GO:0006397">
    <property type="term" value="P:mRNA processing"/>
    <property type="evidence" value="ECO:0007669"/>
    <property type="project" value="UniProtKB-UniRule"/>
</dbReference>
<dbReference type="GO" id="GO:0010468">
    <property type="term" value="P:regulation of gene expression"/>
    <property type="evidence" value="ECO:0007669"/>
    <property type="project" value="TreeGrafter"/>
</dbReference>
<dbReference type="GO" id="GO:0006364">
    <property type="term" value="P:rRNA processing"/>
    <property type="evidence" value="ECO:0007669"/>
    <property type="project" value="UniProtKB-UniRule"/>
</dbReference>
<dbReference type="GO" id="GO:0008033">
    <property type="term" value="P:tRNA processing"/>
    <property type="evidence" value="ECO:0007669"/>
    <property type="project" value="UniProtKB-KW"/>
</dbReference>
<dbReference type="CDD" id="cd10845">
    <property type="entry name" value="DSRM_RNAse_III_family"/>
    <property type="match status" value="1"/>
</dbReference>
<dbReference type="CDD" id="cd00593">
    <property type="entry name" value="RIBOc"/>
    <property type="match status" value="1"/>
</dbReference>
<dbReference type="FunFam" id="1.10.1520.10:FF:000001">
    <property type="entry name" value="Ribonuclease 3"/>
    <property type="match status" value="1"/>
</dbReference>
<dbReference type="Gene3D" id="3.30.160.20">
    <property type="match status" value="1"/>
</dbReference>
<dbReference type="Gene3D" id="1.10.1520.10">
    <property type="entry name" value="Ribonuclease III domain"/>
    <property type="match status" value="1"/>
</dbReference>
<dbReference type="HAMAP" id="MF_00104">
    <property type="entry name" value="RNase_III"/>
    <property type="match status" value="1"/>
</dbReference>
<dbReference type="InterPro" id="IPR014720">
    <property type="entry name" value="dsRBD_dom"/>
</dbReference>
<dbReference type="InterPro" id="IPR011907">
    <property type="entry name" value="RNase_III"/>
</dbReference>
<dbReference type="InterPro" id="IPR000999">
    <property type="entry name" value="RNase_III_dom"/>
</dbReference>
<dbReference type="InterPro" id="IPR036389">
    <property type="entry name" value="RNase_III_sf"/>
</dbReference>
<dbReference type="NCBIfam" id="TIGR02191">
    <property type="entry name" value="RNaseIII"/>
    <property type="match status" value="1"/>
</dbReference>
<dbReference type="PANTHER" id="PTHR11207:SF0">
    <property type="entry name" value="RIBONUCLEASE 3"/>
    <property type="match status" value="1"/>
</dbReference>
<dbReference type="PANTHER" id="PTHR11207">
    <property type="entry name" value="RIBONUCLEASE III"/>
    <property type="match status" value="1"/>
</dbReference>
<dbReference type="Pfam" id="PF00035">
    <property type="entry name" value="dsrm"/>
    <property type="match status" value="1"/>
</dbReference>
<dbReference type="Pfam" id="PF14622">
    <property type="entry name" value="Ribonucleas_3_3"/>
    <property type="match status" value="1"/>
</dbReference>
<dbReference type="SMART" id="SM00358">
    <property type="entry name" value="DSRM"/>
    <property type="match status" value="1"/>
</dbReference>
<dbReference type="SMART" id="SM00535">
    <property type="entry name" value="RIBOc"/>
    <property type="match status" value="1"/>
</dbReference>
<dbReference type="SUPFAM" id="SSF54768">
    <property type="entry name" value="dsRNA-binding domain-like"/>
    <property type="match status" value="1"/>
</dbReference>
<dbReference type="SUPFAM" id="SSF69065">
    <property type="entry name" value="RNase III domain-like"/>
    <property type="match status" value="1"/>
</dbReference>
<dbReference type="PROSITE" id="PS50137">
    <property type="entry name" value="DS_RBD"/>
    <property type="match status" value="1"/>
</dbReference>
<dbReference type="PROSITE" id="PS00517">
    <property type="entry name" value="RNASE_3_1"/>
    <property type="match status" value="1"/>
</dbReference>
<dbReference type="PROSITE" id="PS50142">
    <property type="entry name" value="RNASE_3_2"/>
    <property type="match status" value="1"/>
</dbReference>
<proteinExistence type="inferred from homology"/>
<keyword id="KW-0963">Cytoplasm</keyword>
<keyword id="KW-0255">Endonuclease</keyword>
<keyword id="KW-0378">Hydrolase</keyword>
<keyword id="KW-0460">Magnesium</keyword>
<keyword id="KW-0479">Metal-binding</keyword>
<keyword id="KW-0507">mRNA processing</keyword>
<keyword id="KW-0540">Nuclease</keyword>
<keyword id="KW-0694">RNA-binding</keyword>
<keyword id="KW-0698">rRNA processing</keyword>
<keyword id="KW-0699">rRNA-binding</keyword>
<keyword id="KW-0819">tRNA processing</keyword>
<gene>
    <name evidence="1" type="primary">rnc</name>
    <name type="ordered locus">Rpic_0928</name>
</gene>
<feature type="chain" id="PRO_1000094126" description="Ribonuclease 3">
    <location>
        <begin position="1"/>
        <end position="256"/>
    </location>
</feature>
<feature type="domain" description="RNase III" evidence="1">
    <location>
        <begin position="3"/>
        <end position="125"/>
    </location>
</feature>
<feature type="domain" description="DRBM" evidence="1">
    <location>
        <begin position="152"/>
        <end position="222"/>
    </location>
</feature>
<feature type="region of interest" description="Disordered" evidence="2">
    <location>
        <begin position="226"/>
        <end position="256"/>
    </location>
</feature>
<feature type="active site" evidence="1">
    <location>
        <position position="42"/>
    </location>
</feature>
<feature type="active site" evidence="1">
    <location>
        <position position="114"/>
    </location>
</feature>
<feature type="binding site" evidence="1">
    <location>
        <position position="38"/>
    </location>
    <ligand>
        <name>Mg(2+)</name>
        <dbReference type="ChEBI" id="CHEBI:18420"/>
    </ligand>
</feature>
<feature type="binding site" evidence="1">
    <location>
        <position position="111"/>
    </location>
    <ligand>
        <name>Mg(2+)</name>
        <dbReference type="ChEBI" id="CHEBI:18420"/>
    </ligand>
</feature>
<feature type="binding site" evidence="1">
    <location>
        <position position="114"/>
    </location>
    <ligand>
        <name>Mg(2+)</name>
        <dbReference type="ChEBI" id="CHEBI:18420"/>
    </ligand>
</feature>
<accession>B2U981</accession>
<evidence type="ECO:0000255" key="1">
    <source>
        <dbReference type="HAMAP-Rule" id="MF_00104"/>
    </source>
</evidence>
<evidence type="ECO:0000256" key="2">
    <source>
        <dbReference type="SAM" id="MobiDB-lite"/>
    </source>
</evidence>
<comment type="function">
    <text evidence="1">Digests double-stranded RNA. Involved in the processing of primary rRNA transcript to yield the immediate precursors to the large and small rRNAs (23S and 16S). Processes some mRNAs, and tRNAs when they are encoded in the rRNA operon. Processes pre-crRNA and tracrRNA of type II CRISPR loci if present in the organism.</text>
</comment>
<comment type="catalytic activity">
    <reaction evidence="1">
        <text>Endonucleolytic cleavage to 5'-phosphomonoester.</text>
        <dbReference type="EC" id="3.1.26.3"/>
    </reaction>
</comment>
<comment type="cofactor">
    <cofactor evidence="1">
        <name>Mg(2+)</name>
        <dbReference type="ChEBI" id="CHEBI:18420"/>
    </cofactor>
</comment>
<comment type="subunit">
    <text evidence="1">Homodimer.</text>
</comment>
<comment type="subcellular location">
    <subcellularLocation>
        <location evidence="1">Cytoplasm</location>
    </subcellularLocation>
</comment>
<comment type="similarity">
    <text evidence="1">Belongs to the ribonuclease III family.</text>
</comment>
<reference key="1">
    <citation type="submission" date="2008-05" db="EMBL/GenBank/DDBJ databases">
        <title>Complete sequence of chromosome 1 of Ralstonia pickettii 12J.</title>
        <authorList>
            <person name="Lucas S."/>
            <person name="Copeland A."/>
            <person name="Lapidus A."/>
            <person name="Glavina del Rio T."/>
            <person name="Dalin E."/>
            <person name="Tice H."/>
            <person name="Bruce D."/>
            <person name="Goodwin L."/>
            <person name="Pitluck S."/>
            <person name="Meincke L."/>
            <person name="Brettin T."/>
            <person name="Detter J.C."/>
            <person name="Han C."/>
            <person name="Kuske C.R."/>
            <person name="Schmutz J."/>
            <person name="Larimer F."/>
            <person name="Land M."/>
            <person name="Hauser L."/>
            <person name="Kyrpides N."/>
            <person name="Mikhailova N."/>
            <person name="Marsh T."/>
            <person name="Richardson P."/>
        </authorList>
    </citation>
    <scope>NUCLEOTIDE SEQUENCE [LARGE SCALE GENOMIC DNA]</scope>
    <source>
        <strain>12J</strain>
    </source>
</reference>
<name>RNC_RALPJ</name>
<sequence length="256" mass="28405">MSLDALQQRLGYRFSKPELLQQALTHRSHSAMHNERLEFLGDSILNCAVADMLYGMFGKLDEGDLSRVRANLVKQQALYEIAQMLQLPDALRLGEGELKSGGFRRPSILADALEAIFGAVFLDGGFDAARTLIRKLYIPILEQVDPRTLGKDAKTLLQEYLQGHKIALPLYTVVATHGAAHNQQFEVECSIPKLEIRVSGSGASRRAAEQSAAKLALDEAHRLVPQLVKRSRAERTGKTRKQATPPDPQLSLRLKE</sequence>
<organism>
    <name type="scientific">Ralstonia pickettii (strain 12J)</name>
    <dbReference type="NCBI Taxonomy" id="402626"/>
    <lineage>
        <taxon>Bacteria</taxon>
        <taxon>Pseudomonadati</taxon>
        <taxon>Pseudomonadota</taxon>
        <taxon>Betaproteobacteria</taxon>
        <taxon>Burkholderiales</taxon>
        <taxon>Burkholderiaceae</taxon>
        <taxon>Ralstonia</taxon>
    </lineage>
</organism>
<protein>
    <recommendedName>
        <fullName evidence="1">Ribonuclease 3</fullName>
        <ecNumber evidence="1">3.1.26.3</ecNumber>
    </recommendedName>
    <alternativeName>
        <fullName evidence="1">Ribonuclease III</fullName>
        <shortName evidence="1">RNase III</shortName>
    </alternativeName>
</protein>